<sequence length="229" mass="25424">MQPLEVGLVPAPAGEPRLTRWLRRGSGILAHLVALGFTIFLTALSRPGTSLFSWHPVFMALAFCLCMAEAILLFSPEHSLFFFCSRKARIRLHWAGQTLAILCAALGLGFIISSRTRSELPHLVSWHSWVGALTLLATAVQALCGLCLLCPRAARVSRVARLKLYHLTCGLVVYLMATVTVLLGMYSVWFQAQIKGAAWYLCLALPVYPALVIMHQISRSYLPRKKMEM</sequence>
<protein>
    <recommendedName>
        <fullName evidence="5">Probable transmembrane reductase CYB561D1</fullName>
        <ecNumber evidence="5">7.2.1.3</ecNumber>
    </recommendedName>
    <alternativeName>
        <fullName evidence="6">Cytochrome b561 domain-containing protein 1</fullName>
    </alternativeName>
</protein>
<reference key="1">
    <citation type="journal article" date="2004" name="Nat. Genet.">
        <title>Complete sequencing and characterization of 21,243 full-length human cDNAs.</title>
        <authorList>
            <person name="Ota T."/>
            <person name="Suzuki Y."/>
            <person name="Nishikawa T."/>
            <person name="Otsuki T."/>
            <person name="Sugiyama T."/>
            <person name="Irie R."/>
            <person name="Wakamatsu A."/>
            <person name="Hayashi K."/>
            <person name="Sato H."/>
            <person name="Nagai K."/>
            <person name="Kimura K."/>
            <person name="Makita H."/>
            <person name="Sekine M."/>
            <person name="Obayashi M."/>
            <person name="Nishi T."/>
            <person name="Shibahara T."/>
            <person name="Tanaka T."/>
            <person name="Ishii S."/>
            <person name="Yamamoto J."/>
            <person name="Saito K."/>
            <person name="Kawai Y."/>
            <person name="Isono Y."/>
            <person name="Nakamura Y."/>
            <person name="Nagahari K."/>
            <person name="Murakami K."/>
            <person name="Yasuda T."/>
            <person name="Iwayanagi T."/>
            <person name="Wagatsuma M."/>
            <person name="Shiratori A."/>
            <person name="Sudo H."/>
            <person name="Hosoiri T."/>
            <person name="Kaku Y."/>
            <person name="Kodaira H."/>
            <person name="Kondo H."/>
            <person name="Sugawara M."/>
            <person name="Takahashi M."/>
            <person name="Kanda K."/>
            <person name="Yokoi T."/>
            <person name="Furuya T."/>
            <person name="Kikkawa E."/>
            <person name="Omura Y."/>
            <person name="Abe K."/>
            <person name="Kamihara K."/>
            <person name="Katsuta N."/>
            <person name="Sato K."/>
            <person name="Tanikawa M."/>
            <person name="Yamazaki M."/>
            <person name="Ninomiya K."/>
            <person name="Ishibashi T."/>
            <person name="Yamashita H."/>
            <person name="Murakawa K."/>
            <person name="Fujimori K."/>
            <person name="Tanai H."/>
            <person name="Kimata M."/>
            <person name="Watanabe M."/>
            <person name="Hiraoka S."/>
            <person name="Chiba Y."/>
            <person name="Ishida S."/>
            <person name="Ono Y."/>
            <person name="Takiguchi S."/>
            <person name="Watanabe S."/>
            <person name="Yosida M."/>
            <person name="Hotuta T."/>
            <person name="Kusano J."/>
            <person name="Kanehori K."/>
            <person name="Takahashi-Fujii A."/>
            <person name="Hara H."/>
            <person name="Tanase T.-O."/>
            <person name="Nomura Y."/>
            <person name="Togiya S."/>
            <person name="Komai F."/>
            <person name="Hara R."/>
            <person name="Takeuchi K."/>
            <person name="Arita M."/>
            <person name="Imose N."/>
            <person name="Musashino K."/>
            <person name="Yuuki H."/>
            <person name="Oshima A."/>
            <person name="Sasaki N."/>
            <person name="Aotsuka S."/>
            <person name="Yoshikawa Y."/>
            <person name="Matsunawa H."/>
            <person name="Ichihara T."/>
            <person name="Shiohata N."/>
            <person name="Sano S."/>
            <person name="Moriya S."/>
            <person name="Momiyama H."/>
            <person name="Satoh N."/>
            <person name="Takami S."/>
            <person name="Terashima Y."/>
            <person name="Suzuki O."/>
            <person name="Nakagawa S."/>
            <person name="Senoh A."/>
            <person name="Mizoguchi H."/>
            <person name="Goto Y."/>
            <person name="Shimizu F."/>
            <person name="Wakebe H."/>
            <person name="Hishigaki H."/>
            <person name="Watanabe T."/>
            <person name="Sugiyama A."/>
            <person name="Takemoto M."/>
            <person name="Kawakami B."/>
            <person name="Yamazaki M."/>
            <person name="Watanabe K."/>
            <person name="Kumagai A."/>
            <person name="Itakura S."/>
            <person name="Fukuzumi Y."/>
            <person name="Fujimori Y."/>
            <person name="Komiyama M."/>
            <person name="Tashiro H."/>
            <person name="Tanigami A."/>
            <person name="Fujiwara T."/>
            <person name="Ono T."/>
            <person name="Yamada K."/>
            <person name="Fujii Y."/>
            <person name="Ozaki K."/>
            <person name="Hirao M."/>
            <person name="Ohmori Y."/>
            <person name="Kawabata A."/>
            <person name="Hikiji T."/>
            <person name="Kobatake N."/>
            <person name="Inagaki H."/>
            <person name="Ikema Y."/>
            <person name="Okamoto S."/>
            <person name="Okitani R."/>
            <person name="Kawakami T."/>
            <person name="Noguchi S."/>
            <person name="Itoh T."/>
            <person name="Shigeta K."/>
            <person name="Senba T."/>
            <person name="Matsumura K."/>
            <person name="Nakajima Y."/>
            <person name="Mizuno T."/>
            <person name="Morinaga M."/>
            <person name="Sasaki M."/>
            <person name="Togashi T."/>
            <person name="Oyama M."/>
            <person name="Hata H."/>
            <person name="Watanabe M."/>
            <person name="Komatsu T."/>
            <person name="Mizushima-Sugano J."/>
            <person name="Satoh T."/>
            <person name="Shirai Y."/>
            <person name="Takahashi Y."/>
            <person name="Nakagawa K."/>
            <person name="Okumura K."/>
            <person name="Nagase T."/>
            <person name="Nomura N."/>
            <person name="Kikuchi H."/>
            <person name="Masuho Y."/>
            <person name="Yamashita R."/>
            <person name="Nakai K."/>
            <person name="Yada T."/>
            <person name="Nakamura Y."/>
            <person name="Ohara O."/>
            <person name="Isogai T."/>
            <person name="Sugano S."/>
        </authorList>
    </citation>
    <scope>NUCLEOTIDE SEQUENCE [LARGE SCALE MRNA] (ISOFORMS 1; 2 AND 3)</scope>
    <source>
        <tissue>Brain</tissue>
    </source>
</reference>
<reference key="2">
    <citation type="journal article" date="2006" name="Genome Res.">
        <title>Diversification of transcriptional modulation: large-scale identification and characterization of putative alternative promoters of human genes.</title>
        <authorList>
            <person name="Kimura K."/>
            <person name="Wakamatsu A."/>
            <person name="Suzuki Y."/>
            <person name="Ota T."/>
            <person name="Nishikawa T."/>
            <person name="Yamashita R."/>
            <person name="Yamamoto J."/>
            <person name="Sekine M."/>
            <person name="Tsuritani K."/>
            <person name="Wakaguri H."/>
            <person name="Ishii S."/>
            <person name="Sugiyama T."/>
            <person name="Saito K."/>
            <person name="Isono Y."/>
            <person name="Irie R."/>
            <person name="Kushida N."/>
            <person name="Yoneyama T."/>
            <person name="Otsuka R."/>
            <person name="Kanda K."/>
            <person name="Yokoi T."/>
            <person name="Kondo H."/>
            <person name="Wagatsuma M."/>
            <person name="Murakawa K."/>
            <person name="Ishida S."/>
            <person name="Ishibashi T."/>
            <person name="Takahashi-Fujii A."/>
            <person name="Tanase T."/>
            <person name="Nagai K."/>
            <person name="Kikuchi H."/>
            <person name="Nakai K."/>
            <person name="Isogai T."/>
            <person name="Sugano S."/>
        </authorList>
    </citation>
    <scope>NUCLEOTIDE SEQUENCE [LARGE SCALE MRNA]</scope>
</reference>
<reference key="3">
    <citation type="journal article" date="2006" name="Nature">
        <title>The DNA sequence and biological annotation of human chromosome 1.</title>
        <authorList>
            <person name="Gregory S.G."/>
            <person name="Barlow K.F."/>
            <person name="McLay K.E."/>
            <person name="Kaul R."/>
            <person name="Swarbreck D."/>
            <person name="Dunham A."/>
            <person name="Scott C.E."/>
            <person name="Howe K.L."/>
            <person name="Woodfine K."/>
            <person name="Spencer C.C.A."/>
            <person name="Jones M.C."/>
            <person name="Gillson C."/>
            <person name="Searle S."/>
            <person name="Zhou Y."/>
            <person name="Kokocinski F."/>
            <person name="McDonald L."/>
            <person name="Evans R."/>
            <person name="Phillips K."/>
            <person name="Atkinson A."/>
            <person name="Cooper R."/>
            <person name="Jones C."/>
            <person name="Hall R.E."/>
            <person name="Andrews T.D."/>
            <person name="Lloyd C."/>
            <person name="Ainscough R."/>
            <person name="Almeida J.P."/>
            <person name="Ambrose K.D."/>
            <person name="Anderson F."/>
            <person name="Andrew R.W."/>
            <person name="Ashwell R.I.S."/>
            <person name="Aubin K."/>
            <person name="Babbage A.K."/>
            <person name="Bagguley C.L."/>
            <person name="Bailey J."/>
            <person name="Beasley H."/>
            <person name="Bethel G."/>
            <person name="Bird C.P."/>
            <person name="Bray-Allen S."/>
            <person name="Brown J.Y."/>
            <person name="Brown A.J."/>
            <person name="Buckley D."/>
            <person name="Burton J."/>
            <person name="Bye J."/>
            <person name="Carder C."/>
            <person name="Chapman J.C."/>
            <person name="Clark S.Y."/>
            <person name="Clarke G."/>
            <person name="Clee C."/>
            <person name="Cobley V."/>
            <person name="Collier R.E."/>
            <person name="Corby N."/>
            <person name="Coville G.J."/>
            <person name="Davies J."/>
            <person name="Deadman R."/>
            <person name="Dunn M."/>
            <person name="Earthrowl M."/>
            <person name="Ellington A.G."/>
            <person name="Errington H."/>
            <person name="Frankish A."/>
            <person name="Frankland J."/>
            <person name="French L."/>
            <person name="Garner P."/>
            <person name="Garnett J."/>
            <person name="Gay L."/>
            <person name="Ghori M.R.J."/>
            <person name="Gibson R."/>
            <person name="Gilby L.M."/>
            <person name="Gillett W."/>
            <person name="Glithero R.J."/>
            <person name="Grafham D.V."/>
            <person name="Griffiths C."/>
            <person name="Griffiths-Jones S."/>
            <person name="Grocock R."/>
            <person name="Hammond S."/>
            <person name="Harrison E.S.I."/>
            <person name="Hart E."/>
            <person name="Haugen E."/>
            <person name="Heath P.D."/>
            <person name="Holmes S."/>
            <person name="Holt K."/>
            <person name="Howden P.J."/>
            <person name="Hunt A.R."/>
            <person name="Hunt S.E."/>
            <person name="Hunter G."/>
            <person name="Isherwood J."/>
            <person name="James R."/>
            <person name="Johnson C."/>
            <person name="Johnson D."/>
            <person name="Joy A."/>
            <person name="Kay M."/>
            <person name="Kershaw J.K."/>
            <person name="Kibukawa M."/>
            <person name="Kimberley A.M."/>
            <person name="King A."/>
            <person name="Knights A.J."/>
            <person name="Lad H."/>
            <person name="Laird G."/>
            <person name="Lawlor S."/>
            <person name="Leongamornlert D.A."/>
            <person name="Lloyd D.M."/>
            <person name="Loveland J."/>
            <person name="Lovell J."/>
            <person name="Lush M.J."/>
            <person name="Lyne R."/>
            <person name="Martin S."/>
            <person name="Mashreghi-Mohammadi M."/>
            <person name="Matthews L."/>
            <person name="Matthews N.S.W."/>
            <person name="McLaren S."/>
            <person name="Milne S."/>
            <person name="Mistry S."/>
            <person name="Moore M.J.F."/>
            <person name="Nickerson T."/>
            <person name="O'Dell C.N."/>
            <person name="Oliver K."/>
            <person name="Palmeiri A."/>
            <person name="Palmer S.A."/>
            <person name="Parker A."/>
            <person name="Patel D."/>
            <person name="Pearce A.V."/>
            <person name="Peck A.I."/>
            <person name="Pelan S."/>
            <person name="Phelps K."/>
            <person name="Phillimore B.J."/>
            <person name="Plumb R."/>
            <person name="Rajan J."/>
            <person name="Raymond C."/>
            <person name="Rouse G."/>
            <person name="Saenphimmachak C."/>
            <person name="Sehra H.K."/>
            <person name="Sheridan E."/>
            <person name="Shownkeen R."/>
            <person name="Sims S."/>
            <person name="Skuce C.D."/>
            <person name="Smith M."/>
            <person name="Steward C."/>
            <person name="Subramanian S."/>
            <person name="Sycamore N."/>
            <person name="Tracey A."/>
            <person name="Tromans A."/>
            <person name="Van Helmond Z."/>
            <person name="Wall M."/>
            <person name="Wallis J.M."/>
            <person name="White S."/>
            <person name="Whitehead S.L."/>
            <person name="Wilkinson J.E."/>
            <person name="Willey D.L."/>
            <person name="Williams H."/>
            <person name="Wilming L."/>
            <person name="Wray P.W."/>
            <person name="Wu Z."/>
            <person name="Coulson A."/>
            <person name="Vaudin M."/>
            <person name="Sulston J.E."/>
            <person name="Durbin R.M."/>
            <person name="Hubbard T."/>
            <person name="Wooster R."/>
            <person name="Dunham I."/>
            <person name="Carter N.P."/>
            <person name="McVean G."/>
            <person name="Ross M.T."/>
            <person name="Harrow J."/>
            <person name="Olson M.V."/>
            <person name="Beck S."/>
            <person name="Rogers J."/>
            <person name="Bentley D.R."/>
        </authorList>
    </citation>
    <scope>NUCLEOTIDE SEQUENCE [LARGE SCALE GENOMIC DNA]</scope>
</reference>
<reference key="4">
    <citation type="journal article" date="2004" name="Genome Res.">
        <title>The status, quality, and expansion of the NIH full-length cDNA project: the Mammalian Gene Collection (MGC).</title>
        <authorList>
            <consortium name="The MGC Project Team"/>
        </authorList>
    </citation>
    <scope>NUCLEOTIDE SEQUENCE [LARGE SCALE MRNA] (ISOFORM 1)</scope>
    <source>
        <tissue>Liver</tissue>
    </source>
</reference>
<gene>
    <name evidence="6" type="primary">CYB561D1</name>
</gene>
<organism>
    <name type="scientific">Homo sapiens</name>
    <name type="common">Human</name>
    <dbReference type="NCBI Taxonomy" id="9606"/>
    <lineage>
        <taxon>Eukaryota</taxon>
        <taxon>Metazoa</taxon>
        <taxon>Chordata</taxon>
        <taxon>Craniata</taxon>
        <taxon>Vertebrata</taxon>
        <taxon>Euteleostomi</taxon>
        <taxon>Mammalia</taxon>
        <taxon>Eutheria</taxon>
        <taxon>Euarchontoglires</taxon>
        <taxon>Primates</taxon>
        <taxon>Haplorrhini</taxon>
        <taxon>Catarrhini</taxon>
        <taxon>Hominidae</taxon>
        <taxon>Homo</taxon>
    </lineage>
</organism>
<comment type="function">
    <text evidence="5">Probable transmembrane reductase that may use ascorbate as an electron donor and transfer electrons across membranes to reduce monodehydro-L-ascorbate radical and iron cations Fe(3+) in another cellular compartment.</text>
</comment>
<comment type="catalytic activity">
    <reaction evidence="5">
        <text>monodehydro-L-ascorbate radical(out) + L-ascorbate(in) = monodehydro-L-ascorbate radical(in) + L-ascorbate(out)</text>
        <dbReference type="Rhea" id="RHEA:66524"/>
        <dbReference type="ChEBI" id="CHEBI:38290"/>
        <dbReference type="ChEBI" id="CHEBI:59513"/>
    </reaction>
</comment>
<comment type="catalytic activity">
    <reaction evidence="5">
        <text>Fe(3+)(out) + L-ascorbate(in) = monodehydro-L-ascorbate radical(in) + Fe(2+)(out) + H(+)</text>
        <dbReference type="Rhea" id="RHEA:30403"/>
        <dbReference type="ChEBI" id="CHEBI:15378"/>
        <dbReference type="ChEBI" id="CHEBI:29033"/>
        <dbReference type="ChEBI" id="CHEBI:29034"/>
        <dbReference type="ChEBI" id="CHEBI:38290"/>
        <dbReference type="ChEBI" id="CHEBI:59513"/>
        <dbReference type="EC" id="7.2.1.3"/>
    </reaction>
</comment>
<comment type="cofactor">
    <cofactor evidence="1">
        <name>heme b</name>
        <dbReference type="ChEBI" id="CHEBI:60344"/>
    </cofactor>
    <text evidence="1">Binds 2 heme b groups non-covalently.</text>
</comment>
<comment type="interaction">
    <interactant intactId="EBI-12873482">
        <id>Q8N8Q1</id>
    </interactant>
    <interactant intactId="EBI-13059134">
        <id>Q13520</id>
        <label>AQP6</label>
    </interactant>
    <organismsDiffer>false</organismsDiffer>
    <experiments>3</experiments>
</comment>
<comment type="interaction">
    <interactant intactId="EBI-12873482">
        <id>Q8N8Q1</id>
    </interactant>
    <interactant intactId="EBI-349854">
        <id>P13569</id>
        <label>CFTR</label>
    </interactant>
    <organismsDiffer>false</organismsDiffer>
    <experiments>3</experiments>
</comment>
<comment type="interaction">
    <interactant intactId="EBI-12873482">
        <id>Q8N8Q1</id>
    </interactant>
    <interactant intactId="EBI-9304251">
        <id>Q05329</id>
        <label>GAD2</label>
    </interactant>
    <organismsDiffer>false</organismsDiffer>
    <experiments>3</experiments>
</comment>
<comment type="interaction">
    <interactant intactId="EBI-12873482">
        <id>Q8N8Q1</id>
    </interactant>
    <interactant intactId="EBI-11603430">
        <id>Q6PL24</id>
        <label>TMED8</label>
    </interactant>
    <organismsDiffer>false</organismsDiffer>
    <experiments>3</experiments>
</comment>
<comment type="subcellular location">
    <subcellularLocation>
        <location evidence="5">Membrane</location>
        <topology evidence="5">Multi-pass membrane protein</topology>
    </subcellularLocation>
</comment>
<comment type="alternative products">
    <event type="alternative splicing"/>
    <isoform>
        <id>Q8N8Q1-1</id>
        <name>1</name>
        <sequence type="displayed"/>
    </isoform>
    <isoform>
        <id>Q8N8Q1-2</id>
        <name>2</name>
        <sequence type="described" ref="VSP_038649 VSP_038650"/>
    </isoform>
    <isoform>
        <id>Q8N8Q1-3</id>
        <name>3</name>
        <sequence type="described" ref="VSP_041162"/>
    </isoform>
    <isoform>
        <id>Q8N8Q1-4</id>
        <name>4</name>
        <sequence type="described" ref="VSP_046986"/>
    </isoform>
    <isoform>
        <id>Q8N8Q1-5</id>
        <name>5</name>
        <sequence type="described" ref="VSP_046985"/>
    </isoform>
</comment>
<proteinExistence type="evidence at protein level"/>
<feature type="chain" id="PRO_0000151034" description="Probable transmembrane reductase CYB561D1">
    <location>
        <begin position="1"/>
        <end position="229"/>
    </location>
</feature>
<feature type="topological domain" description="Cytoplasmic" evidence="5">
    <location>
        <begin position="1"/>
        <end position="24"/>
    </location>
</feature>
<feature type="transmembrane region" description="Helical" evidence="2">
    <location>
        <begin position="25"/>
        <end position="45"/>
    </location>
</feature>
<feature type="topological domain" description="Lumenal" evidence="5">
    <location>
        <begin position="46"/>
        <end position="53"/>
    </location>
</feature>
<feature type="transmembrane region" description="Helical" evidence="2">
    <location>
        <begin position="54"/>
        <end position="74"/>
    </location>
</feature>
<feature type="topological domain" description="Cytoplasmic" evidence="5">
    <location>
        <begin position="75"/>
        <end position="91"/>
    </location>
</feature>
<feature type="transmembrane region" description="Helical" evidence="2">
    <location>
        <begin position="92"/>
        <end position="112"/>
    </location>
</feature>
<feature type="topological domain" description="Lumenal" evidence="5">
    <location>
        <begin position="113"/>
        <end position="128"/>
    </location>
</feature>
<feature type="transmembrane region" description="Helical" evidence="2">
    <location>
        <begin position="129"/>
        <end position="149"/>
    </location>
</feature>
<feature type="topological domain" description="Cytoplasmic" evidence="5">
    <location>
        <begin position="150"/>
        <end position="169"/>
    </location>
</feature>
<feature type="transmembrane region" description="Helical" evidence="2">
    <location>
        <begin position="170"/>
        <end position="190"/>
    </location>
</feature>
<feature type="topological domain" description="Lumenal" evidence="5">
    <location>
        <begin position="191"/>
        <end position="193"/>
    </location>
</feature>
<feature type="transmembrane region" description="Helical" evidence="2">
    <location>
        <begin position="194"/>
        <end position="214"/>
    </location>
</feature>
<feature type="topological domain" description="Cytoplasmic" evidence="5">
    <location>
        <begin position="215"/>
        <end position="229"/>
    </location>
</feature>
<feature type="domain" description="Cytochrome b561" evidence="3">
    <location>
        <begin position="22"/>
        <end position="224"/>
    </location>
</feature>
<feature type="binding site" description="axial binding residue" evidence="1">
    <location>
        <position position="55"/>
    </location>
    <ligand>
        <name>heme b</name>
        <dbReference type="ChEBI" id="CHEBI:60344"/>
        <label>1</label>
    </ligand>
    <ligandPart>
        <name>Fe</name>
        <dbReference type="ChEBI" id="CHEBI:18248"/>
    </ligandPart>
</feature>
<feature type="binding site" description="axial binding residue" evidence="1">
    <location>
        <position position="93"/>
    </location>
    <ligand>
        <name>heme b</name>
        <dbReference type="ChEBI" id="CHEBI:60344"/>
        <label>2</label>
    </ligand>
    <ligandPart>
        <name>Fe</name>
        <dbReference type="ChEBI" id="CHEBI:18248"/>
    </ligandPart>
</feature>
<feature type="binding site" description="axial binding residue" evidence="1">
    <location>
        <position position="127"/>
    </location>
    <ligand>
        <name>heme b</name>
        <dbReference type="ChEBI" id="CHEBI:60344"/>
        <label>1</label>
    </ligand>
    <ligandPart>
        <name>Fe</name>
        <dbReference type="ChEBI" id="CHEBI:18248"/>
    </ligandPart>
</feature>
<feature type="binding site" description="axial binding residue" evidence="1">
    <location>
        <position position="166"/>
    </location>
    <ligand>
        <name>heme b</name>
        <dbReference type="ChEBI" id="CHEBI:60344"/>
        <label>2</label>
    </ligand>
    <ligandPart>
        <name>Fe</name>
        <dbReference type="ChEBI" id="CHEBI:18248"/>
    </ligandPart>
</feature>
<feature type="splice variant" id="VSP_046985" description="In isoform 5." evidence="5">
    <location>
        <begin position="6"/>
        <end position="62"/>
    </location>
</feature>
<feature type="splice variant" id="VSP_046986" description="In isoform 4." evidence="5">
    <original>SLFSWHPVFMALAFCLCMAEAILLFSPEHSLFFFCSRKARIRLHWAGQTLAILCAALGLGFIISSRTRSELPHLVSWHSWVGALTLLATAVQALCGLCLLCPRAARVSRVARLKLYHLTCGLVVYLMATVTVLLGMYSVWFQAQIKGAAWYLCLALPVYPALVIMHQISRSYLPRKKMEM</original>
    <variation>KTGPLMEDRSEGGRARWVMPEIPALWEADAGGSLEVFSPGTLYSWPWRMYESTSFFSGLQARHEAYWLSPMFTVLPLHG</variation>
    <location>
        <begin position="50"/>
        <end position="229"/>
    </location>
</feature>
<feature type="splice variant" id="VSP_038649" description="In isoform 2." evidence="4">
    <original>SLFSWHPVFMALAFCLCMAEAILLFSPEHSLFFFCSRKARIRLHWAGQTLAILCAALGLGFIISSRTRSELPHLVSWHSWVGAL</original>
    <variation>KTGPLMEDRSEGGRARWVMPEIPALWEADAGGSLEVFSPGTLYSWPWRSASAWLKPSYSSHLNTPCSSSAPEKHGSGSTGQGRP</variation>
    <location>
        <begin position="50"/>
        <end position="133"/>
    </location>
</feature>
<feature type="splice variant" id="VSP_041162" description="In isoform 3." evidence="4">
    <original>SLFSWHPVFMALA</original>
    <variation>KTGPLMEDRSEGGRARWVMPEIPALWEADAGGSLE</variation>
    <location>
        <begin position="50"/>
        <end position="62"/>
    </location>
</feature>
<feature type="splice variant" id="VSP_038650" description="In isoform 2." evidence="4">
    <location>
        <begin position="134"/>
        <end position="229"/>
    </location>
</feature>
<name>C56D1_HUMAN</name>
<evidence type="ECO:0000250" key="1">
    <source>
        <dbReference type="UniProtKB" id="Q53TN4"/>
    </source>
</evidence>
<evidence type="ECO:0000255" key="2"/>
<evidence type="ECO:0000255" key="3">
    <source>
        <dbReference type="PROSITE-ProRule" id="PRU00242"/>
    </source>
</evidence>
<evidence type="ECO:0000303" key="4">
    <source>
    </source>
</evidence>
<evidence type="ECO:0000305" key="5"/>
<evidence type="ECO:0000312" key="6">
    <source>
        <dbReference type="HGNC" id="HGNC:26804"/>
    </source>
</evidence>
<dbReference type="EC" id="7.2.1.3" evidence="5"/>
<dbReference type="EMBL" id="AK096354">
    <property type="protein sequence ID" value="BAC04767.1"/>
    <property type="molecule type" value="mRNA"/>
</dbReference>
<dbReference type="EMBL" id="AK294992">
    <property type="protein sequence ID" value="BAG58058.1"/>
    <property type="molecule type" value="mRNA"/>
</dbReference>
<dbReference type="EMBL" id="DA092655">
    <property type="status" value="NOT_ANNOTATED_CDS"/>
    <property type="molecule type" value="mRNA"/>
</dbReference>
<dbReference type="EMBL" id="AL355145">
    <property type="status" value="NOT_ANNOTATED_CDS"/>
    <property type="molecule type" value="Genomic_DNA"/>
</dbReference>
<dbReference type="EMBL" id="BC093683">
    <property type="protein sequence ID" value="AAH93683.1"/>
    <property type="molecule type" value="mRNA"/>
</dbReference>
<dbReference type="EMBL" id="BC111999">
    <property type="protein sequence ID" value="AAI12000.1"/>
    <property type="molecule type" value="mRNA"/>
</dbReference>
<dbReference type="CCDS" id="CCDS44188.1">
    <molecule id="Q8N8Q1-3"/>
</dbReference>
<dbReference type="CCDS" id="CCDS44189.1">
    <molecule id="Q8N8Q1-5"/>
</dbReference>
<dbReference type="CCDS" id="CCDS44190.1">
    <molecule id="Q8N8Q1-2"/>
</dbReference>
<dbReference type="CCDS" id="CCDS44191.1">
    <molecule id="Q8N8Q1-4"/>
</dbReference>
<dbReference type="CCDS" id="CCDS800.1">
    <molecule id="Q8N8Q1-1"/>
</dbReference>
<dbReference type="RefSeq" id="NP_001127872.1">
    <molecule id="Q8N8Q1-3"/>
    <property type="nucleotide sequence ID" value="NM_001134400.2"/>
</dbReference>
<dbReference type="RefSeq" id="NP_001127874.1">
    <molecule id="Q8N8Q1-5"/>
    <property type="nucleotide sequence ID" value="NM_001134402.2"/>
</dbReference>
<dbReference type="RefSeq" id="NP_001127875.1">
    <molecule id="Q8N8Q1-2"/>
    <property type="nucleotide sequence ID" value="NM_001134403.2"/>
</dbReference>
<dbReference type="RefSeq" id="NP_001127876.1">
    <molecule id="Q8N8Q1-4"/>
    <property type="nucleotide sequence ID" value="NM_001134404.2"/>
</dbReference>
<dbReference type="RefSeq" id="NP_872386.1">
    <molecule id="Q8N8Q1-1"/>
    <property type="nucleotide sequence ID" value="NM_182580.3"/>
</dbReference>
<dbReference type="SMR" id="Q8N8Q1"/>
<dbReference type="BioGRID" id="129916">
    <property type="interactions" value="5"/>
</dbReference>
<dbReference type="FunCoup" id="Q8N8Q1">
    <property type="interactions" value="190"/>
</dbReference>
<dbReference type="IntAct" id="Q8N8Q1">
    <property type="interactions" value="4"/>
</dbReference>
<dbReference type="MINT" id="Q8N8Q1"/>
<dbReference type="STRING" id="9606.ENSP00000358884"/>
<dbReference type="iPTMnet" id="Q8N8Q1"/>
<dbReference type="PhosphoSitePlus" id="Q8N8Q1"/>
<dbReference type="BioMuta" id="CYB561D1"/>
<dbReference type="DMDM" id="67462193"/>
<dbReference type="jPOST" id="Q8N8Q1"/>
<dbReference type="MassIVE" id="Q8N8Q1"/>
<dbReference type="PeptideAtlas" id="Q8N8Q1"/>
<dbReference type="ProteomicsDB" id="19474"/>
<dbReference type="ProteomicsDB" id="64575"/>
<dbReference type="ProteomicsDB" id="72442">
    <molecule id="Q8N8Q1-1"/>
</dbReference>
<dbReference type="ProteomicsDB" id="72443">
    <molecule id="Q8N8Q1-2"/>
</dbReference>
<dbReference type="ProteomicsDB" id="72444">
    <molecule id="Q8N8Q1-3"/>
</dbReference>
<dbReference type="TopDownProteomics" id="Q8N8Q1-1">
    <molecule id="Q8N8Q1-1"/>
</dbReference>
<dbReference type="Antibodypedia" id="20066">
    <property type="antibodies" value="106 antibodies from 21 providers"/>
</dbReference>
<dbReference type="DNASU" id="284613"/>
<dbReference type="Ensembl" id="ENST00000310611.8">
    <molecule id="Q8N8Q1-2"/>
    <property type="protein sequence ID" value="ENSP00000309324.4"/>
    <property type="gene ID" value="ENSG00000174151.15"/>
</dbReference>
<dbReference type="Ensembl" id="ENST00000369868.7">
    <molecule id="Q8N8Q1-3"/>
    <property type="protein sequence ID" value="ENSP00000358884.3"/>
    <property type="gene ID" value="ENSG00000174151.15"/>
</dbReference>
<dbReference type="Ensembl" id="ENST00000393709.3">
    <molecule id="Q8N8Q1-5"/>
    <property type="protein sequence ID" value="ENSP00000377312.3"/>
    <property type="gene ID" value="ENSG00000174151.15"/>
</dbReference>
<dbReference type="Ensembl" id="ENST00000420578.7">
    <molecule id="Q8N8Q1-1"/>
    <property type="protein sequence ID" value="ENSP00000413530.2"/>
    <property type="gene ID" value="ENSG00000174151.15"/>
</dbReference>
<dbReference type="Ensembl" id="ENST00000430195.2">
    <molecule id="Q8N8Q1-4"/>
    <property type="protein sequence ID" value="ENSP00000416898.2"/>
    <property type="gene ID" value="ENSG00000174151.15"/>
</dbReference>
<dbReference type="GeneID" id="284613"/>
<dbReference type="KEGG" id="hsa:284613"/>
<dbReference type="MANE-Select" id="ENST00000420578.7">
    <property type="protein sequence ID" value="ENSP00000413530.2"/>
    <property type="RefSeq nucleotide sequence ID" value="NM_182580.3"/>
    <property type="RefSeq protein sequence ID" value="NP_872386.1"/>
</dbReference>
<dbReference type="UCSC" id="uc001dxu.4">
    <molecule id="Q8N8Q1-1"/>
    <property type="organism name" value="human"/>
</dbReference>
<dbReference type="AGR" id="HGNC:26804"/>
<dbReference type="CTD" id="284613"/>
<dbReference type="DisGeNET" id="284613"/>
<dbReference type="GeneCards" id="CYB561D1"/>
<dbReference type="HGNC" id="HGNC:26804">
    <property type="gene designation" value="CYB561D1"/>
</dbReference>
<dbReference type="HPA" id="ENSG00000174151">
    <property type="expression patterns" value="Low tissue specificity"/>
</dbReference>
<dbReference type="neXtProt" id="NX_Q8N8Q1"/>
<dbReference type="OpenTargets" id="ENSG00000174151"/>
<dbReference type="PharmGKB" id="PA134872038"/>
<dbReference type="VEuPathDB" id="HostDB:ENSG00000174151"/>
<dbReference type="GeneTree" id="ENSGT00440000038072"/>
<dbReference type="HOGENOM" id="CLU_072399_3_1_1"/>
<dbReference type="InParanoid" id="Q8N8Q1"/>
<dbReference type="OMA" id="SDWFQAT"/>
<dbReference type="OrthoDB" id="432881at2759"/>
<dbReference type="PAN-GO" id="Q8N8Q1">
    <property type="GO annotations" value="2 GO annotations based on evolutionary models"/>
</dbReference>
<dbReference type="PhylomeDB" id="Q8N8Q1"/>
<dbReference type="TreeFam" id="TF323584"/>
<dbReference type="PathwayCommons" id="Q8N8Q1"/>
<dbReference type="SignaLink" id="Q8N8Q1"/>
<dbReference type="BioGRID-ORCS" id="284613">
    <property type="hits" value="19 hits in 1156 CRISPR screens"/>
</dbReference>
<dbReference type="ChiTaRS" id="CYB561D1">
    <property type="organism name" value="human"/>
</dbReference>
<dbReference type="GenomeRNAi" id="284613"/>
<dbReference type="Pharos" id="Q8N8Q1">
    <property type="development level" value="Tdark"/>
</dbReference>
<dbReference type="PRO" id="PR:Q8N8Q1"/>
<dbReference type="Proteomes" id="UP000005640">
    <property type="component" value="Chromosome 1"/>
</dbReference>
<dbReference type="RNAct" id="Q8N8Q1">
    <property type="molecule type" value="protein"/>
</dbReference>
<dbReference type="Bgee" id="ENSG00000174151">
    <property type="expression patterns" value="Expressed in upper arm skin and 143 other cell types or tissues"/>
</dbReference>
<dbReference type="ExpressionAtlas" id="Q8N8Q1">
    <property type="expression patterns" value="baseline and differential"/>
</dbReference>
<dbReference type="GO" id="GO:0016020">
    <property type="term" value="C:membrane"/>
    <property type="evidence" value="ECO:0007669"/>
    <property type="project" value="UniProtKB-SubCell"/>
</dbReference>
<dbReference type="GO" id="GO:0046872">
    <property type="term" value="F:metal ion binding"/>
    <property type="evidence" value="ECO:0007669"/>
    <property type="project" value="UniProtKB-KW"/>
</dbReference>
<dbReference type="GO" id="GO:0140571">
    <property type="term" value="F:transmembrane ascorbate ferrireductase activity"/>
    <property type="evidence" value="ECO:0007669"/>
    <property type="project" value="UniProtKB-EC"/>
</dbReference>
<dbReference type="GO" id="GO:0140575">
    <property type="term" value="F:transmembrane monodehydroascorbate reductase activity"/>
    <property type="evidence" value="ECO:0007669"/>
    <property type="project" value="InterPro"/>
</dbReference>
<dbReference type="CDD" id="cd08761">
    <property type="entry name" value="Cyt_b561_CYB561D2_like"/>
    <property type="match status" value="1"/>
</dbReference>
<dbReference type="Gene3D" id="1.20.120.1770">
    <property type="match status" value="1"/>
</dbReference>
<dbReference type="InterPro" id="IPR045150">
    <property type="entry name" value="CYB561D1/2"/>
</dbReference>
<dbReference type="InterPro" id="IPR006593">
    <property type="entry name" value="Cyt_b561/ferric_Rdtase_TM"/>
</dbReference>
<dbReference type="PANTHER" id="PTHR15422">
    <property type="entry name" value="OS05G0565100 PROTEIN"/>
    <property type="match status" value="1"/>
</dbReference>
<dbReference type="PANTHER" id="PTHR15422:SF9">
    <property type="entry name" value="TRANSMEMBRANE REDUCTASE CYB561D1-RELATED"/>
    <property type="match status" value="1"/>
</dbReference>
<dbReference type="Pfam" id="PF03188">
    <property type="entry name" value="Cytochrom_B561"/>
    <property type="match status" value="1"/>
</dbReference>
<dbReference type="SMART" id="SM00665">
    <property type="entry name" value="B561"/>
    <property type="match status" value="1"/>
</dbReference>
<dbReference type="PROSITE" id="PS50939">
    <property type="entry name" value="CYTOCHROME_B561"/>
    <property type="match status" value="1"/>
</dbReference>
<accession>Q8N8Q1</accession>
<accession>B4DH97</accession>
<accession>E9PCM8</accession>
<accession>Q52M36</accession>
<accession>Q5T6C2</accession>
<accession>Q5T6C3</accession>
<keyword id="KW-0025">Alternative splicing</keyword>
<keyword id="KW-0249">Electron transport</keyword>
<keyword id="KW-0349">Heme</keyword>
<keyword id="KW-0408">Iron</keyword>
<keyword id="KW-0472">Membrane</keyword>
<keyword id="KW-0479">Metal-binding</keyword>
<keyword id="KW-1185">Reference proteome</keyword>
<keyword id="KW-1278">Translocase</keyword>
<keyword id="KW-0812">Transmembrane</keyword>
<keyword id="KW-1133">Transmembrane helix</keyword>
<keyword id="KW-0813">Transport</keyword>